<feature type="chain" id="PRO_0000224747" description="Elongation factor 4">
    <location>
        <begin position="1"/>
        <end position="597"/>
    </location>
</feature>
<feature type="domain" description="tr-type G">
    <location>
        <begin position="2"/>
        <end position="184"/>
    </location>
</feature>
<feature type="binding site" evidence="1">
    <location>
        <begin position="14"/>
        <end position="19"/>
    </location>
    <ligand>
        <name>GTP</name>
        <dbReference type="ChEBI" id="CHEBI:37565"/>
    </ligand>
</feature>
<feature type="binding site" evidence="1">
    <location>
        <begin position="131"/>
        <end position="134"/>
    </location>
    <ligand>
        <name>GTP</name>
        <dbReference type="ChEBI" id="CHEBI:37565"/>
    </ligand>
</feature>
<proteinExistence type="inferred from homology"/>
<accession>Q3JQ75</accession>
<reference key="1">
    <citation type="journal article" date="2010" name="Genome Biol. Evol.">
        <title>Continuing evolution of Burkholderia mallei through genome reduction and large-scale rearrangements.</title>
        <authorList>
            <person name="Losada L."/>
            <person name="Ronning C.M."/>
            <person name="DeShazer D."/>
            <person name="Woods D."/>
            <person name="Fedorova N."/>
            <person name="Kim H.S."/>
            <person name="Shabalina S.A."/>
            <person name="Pearson T.R."/>
            <person name="Brinkac L."/>
            <person name="Tan P."/>
            <person name="Nandi T."/>
            <person name="Crabtree J."/>
            <person name="Badger J."/>
            <person name="Beckstrom-Sternberg S."/>
            <person name="Saqib M."/>
            <person name="Schutzer S.E."/>
            <person name="Keim P."/>
            <person name="Nierman W.C."/>
        </authorList>
    </citation>
    <scope>NUCLEOTIDE SEQUENCE [LARGE SCALE GENOMIC DNA]</scope>
    <source>
        <strain>1710b</strain>
    </source>
</reference>
<gene>
    <name evidence="1" type="primary">lepA</name>
    <name type="ordered locus">BURPS1710b_2897</name>
</gene>
<sequence length="597" mass="66221">MDHIRNFSIIAHIDHGKSTLADRIIQLCGGLSDREMESQVLDSMDLERERGITIKAQTAALTYRARDGKVYNLNLIDTPGHVDFSYEVSRSLSACEGALLVVDASQGVEAQTVANCYTAIELGVEVVPVLNKIDLPAANPENAIAEIEDVIGIDAMDAVRCSAKTGLGVEDVLESLIAKVPPPKGDPDAPLQALIIDSWFDNYVGVVMLVRIVNGTLRPKERIKLMATDAQYAVEHVGVFTPKSRNLESLSAGQVGFIISGIKELTAAKVGDTVTHATKPAPEPLPGFKEVKPQVFAGLYPVEANQYDALRESLEKLKLNDASLQYEPEVSQALGFGFRCGFLGLLHMEIVQERLEREFDMDLITTAPTVVYEVVQSDGTTIMVENPAKMPEPARIAEIREPIVTVNLYMPQDYVGSVITLCEQKRGTQINMQYHGRQVQLTYEIPMAEIVLDFFDRLKSVSRGYASMDYEFKEYRTSDVVKVDMLINGDKVDALSIIVHRSQSQYRGREVAAKMREIIPRQMYDVAIQAAIGAHIIARENIKALRKNVLAKCYGGDITRKKKLLEKQKEGKKRMKQVGSVEIPQEAFLAILRVEDK</sequence>
<name>LEPA_BURP1</name>
<keyword id="KW-0997">Cell inner membrane</keyword>
<keyword id="KW-1003">Cell membrane</keyword>
<keyword id="KW-0342">GTP-binding</keyword>
<keyword id="KW-0378">Hydrolase</keyword>
<keyword id="KW-0472">Membrane</keyword>
<keyword id="KW-0547">Nucleotide-binding</keyword>
<keyword id="KW-0648">Protein biosynthesis</keyword>
<dbReference type="EC" id="3.6.5.n1" evidence="1"/>
<dbReference type="EMBL" id="CP000124">
    <property type="protein sequence ID" value="ABA49398.1"/>
    <property type="molecule type" value="Genomic_DNA"/>
</dbReference>
<dbReference type="RefSeq" id="WP_004193305.1">
    <property type="nucleotide sequence ID" value="NC_007434.1"/>
</dbReference>
<dbReference type="SMR" id="Q3JQ75"/>
<dbReference type="EnsemblBacteria" id="ABA49398">
    <property type="protein sequence ID" value="ABA49398"/>
    <property type="gene ID" value="BURPS1710b_2897"/>
</dbReference>
<dbReference type="GeneID" id="93061011"/>
<dbReference type="KEGG" id="bpm:BURPS1710b_2897"/>
<dbReference type="HOGENOM" id="CLU_009995_3_3_4"/>
<dbReference type="Proteomes" id="UP000002700">
    <property type="component" value="Chromosome I"/>
</dbReference>
<dbReference type="GO" id="GO:0005886">
    <property type="term" value="C:plasma membrane"/>
    <property type="evidence" value="ECO:0007669"/>
    <property type="project" value="UniProtKB-SubCell"/>
</dbReference>
<dbReference type="GO" id="GO:0005525">
    <property type="term" value="F:GTP binding"/>
    <property type="evidence" value="ECO:0007669"/>
    <property type="project" value="UniProtKB-UniRule"/>
</dbReference>
<dbReference type="GO" id="GO:0003924">
    <property type="term" value="F:GTPase activity"/>
    <property type="evidence" value="ECO:0007669"/>
    <property type="project" value="UniProtKB-UniRule"/>
</dbReference>
<dbReference type="GO" id="GO:0097216">
    <property type="term" value="F:guanosine tetraphosphate binding"/>
    <property type="evidence" value="ECO:0007669"/>
    <property type="project" value="UniProtKB-ARBA"/>
</dbReference>
<dbReference type="GO" id="GO:0043022">
    <property type="term" value="F:ribosome binding"/>
    <property type="evidence" value="ECO:0007669"/>
    <property type="project" value="UniProtKB-UniRule"/>
</dbReference>
<dbReference type="GO" id="GO:0003746">
    <property type="term" value="F:translation elongation factor activity"/>
    <property type="evidence" value="ECO:0007669"/>
    <property type="project" value="UniProtKB-UniRule"/>
</dbReference>
<dbReference type="GO" id="GO:0045727">
    <property type="term" value="P:positive regulation of translation"/>
    <property type="evidence" value="ECO:0007669"/>
    <property type="project" value="UniProtKB-UniRule"/>
</dbReference>
<dbReference type="CDD" id="cd03699">
    <property type="entry name" value="EF4_II"/>
    <property type="match status" value="1"/>
</dbReference>
<dbReference type="CDD" id="cd16260">
    <property type="entry name" value="EF4_III"/>
    <property type="match status" value="1"/>
</dbReference>
<dbReference type="CDD" id="cd01890">
    <property type="entry name" value="LepA"/>
    <property type="match status" value="1"/>
</dbReference>
<dbReference type="CDD" id="cd03709">
    <property type="entry name" value="lepA_C"/>
    <property type="match status" value="1"/>
</dbReference>
<dbReference type="FunFam" id="3.40.50.300:FF:000078">
    <property type="entry name" value="Elongation factor 4"/>
    <property type="match status" value="1"/>
</dbReference>
<dbReference type="FunFam" id="2.40.30.10:FF:000015">
    <property type="entry name" value="Translation factor GUF1, mitochondrial"/>
    <property type="match status" value="1"/>
</dbReference>
<dbReference type="FunFam" id="3.30.70.240:FF:000007">
    <property type="entry name" value="Translation factor GUF1, mitochondrial"/>
    <property type="match status" value="1"/>
</dbReference>
<dbReference type="FunFam" id="3.30.70.2570:FF:000001">
    <property type="entry name" value="Translation factor GUF1, mitochondrial"/>
    <property type="match status" value="1"/>
</dbReference>
<dbReference type="FunFam" id="3.30.70.870:FF:000004">
    <property type="entry name" value="Translation factor GUF1, mitochondrial"/>
    <property type="match status" value="1"/>
</dbReference>
<dbReference type="Gene3D" id="3.30.70.240">
    <property type="match status" value="1"/>
</dbReference>
<dbReference type="Gene3D" id="3.30.70.2570">
    <property type="entry name" value="Elongation factor 4, C-terminal domain"/>
    <property type="match status" value="1"/>
</dbReference>
<dbReference type="Gene3D" id="3.30.70.870">
    <property type="entry name" value="Elongation Factor G (Translational Gtpase), domain 3"/>
    <property type="match status" value="1"/>
</dbReference>
<dbReference type="Gene3D" id="3.40.50.300">
    <property type="entry name" value="P-loop containing nucleotide triphosphate hydrolases"/>
    <property type="match status" value="1"/>
</dbReference>
<dbReference type="Gene3D" id="2.40.30.10">
    <property type="entry name" value="Translation factors"/>
    <property type="match status" value="1"/>
</dbReference>
<dbReference type="HAMAP" id="MF_00071">
    <property type="entry name" value="LepA"/>
    <property type="match status" value="1"/>
</dbReference>
<dbReference type="InterPro" id="IPR006297">
    <property type="entry name" value="EF-4"/>
</dbReference>
<dbReference type="InterPro" id="IPR035647">
    <property type="entry name" value="EFG_III/V"/>
</dbReference>
<dbReference type="InterPro" id="IPR000640">
    <property type="entry name" value="EFG_V-like"/>
</dbReference>
<dbReference type="InterPro" id="IPR004161">
    <property type="entry name" value="EFTu-like_2"/>
</dbReference>
<dbReference type="InterPro" id="IPR031157">
    <property type="entry name" value="G_TR_CS"/>
</dbReference>
<dbReference type="InterPro" id="IPR038363">
    <property type="entry name" value="LepA_C_sf"/>
</dbReference>
<dbReference type="InterPro" id="IPR013842">
    <property type="entry name" value="LepA_CTD"/>
</dbReference>
<dbReference type="InterPro" id="IPR035654">
    <property type="entry name" value="LepA_IV"/>
</dbReference>
<dbReference type="InterPro" id="IPR027417">
    <property type="entry name" value="P-loop_NTPase"/>
</dbReference>
<dbReference type="InterPro" id="IPR005225">
    <property type="entry name" value="Small_GTP-bd"/>
</dbReference>
<dbReference type="InterPro" id="IPR000795">
    <property type="entry name" value="T_Tr_GTP-bd_dom"/>
</dbReference>
<dbReference type="InterPro" id="IPR009000">
    <property type="entry name" value="Transl_B-barrel_sf"/>
</dbReference>
<dbReference type="NCBIfam" id="TIGR01393">
    <property type="entry name" value="lepA"/>
    <property type="match status" value="1"/>
</dbReference>
<dbReference type="NCBIfam" id="TIGR00231">
    <property type="entry name" value="small_GTP"/>
    <property type="match status" value="1"/>
</dbReference>
<dbReference type="PANTHER" id="PTHR43512:SF4">
    <property type="entry name" value="TRANSLATION FACTOR GUF1 HOMOLOG, CHLOROPLASTIC"/>
    <property type="match status" value="1"/>
</dbReference>
<dbReference type="PANTHER" id="PTHR43512">
    <property type="entry name" value="TRANSLATION FACTOR GUF1-RELATED"/>
    <property type="match status" value="1"/>
</dbReference>
<dbReference type="Pfam" id="PF00679">
    <property type="entry name" value="EFG_C"/>
    <property type="match status" value="1"/>
</dbReference>
<dbReference type="Pfam" id="PF00009">
    <property type="entry name" value="GTP_EFTU"/>
    <property type="match status" value="1"/>
</dbReference>
<dbReference type="Pfam" id="PF03144">
    <property type="entry name" value="GTP_EFTU_D2"/>
    <property type="match status" value="1"/>
</dbReference>
<dbReference type="Pfam" id="PF06421">
    <property type="entry name" value="LepA_C"/>
    <property type="match status" value="1"/>
</dbReference>
<dbReference type="PRINTS" id="PR00315">
    <property type="entry name" value="ELONGATNFCT"/>
</dbReference>
<dbReference type="SMART" id="SM00838">
    <property type="entry name" value="EFG_C"/>
    <property type="match status" value="1"/>
</dbReference>
<dbReference type="SUPFAM" id="SSF54980">
    <property type="entry name" value="EF-G C-terminal domain-like"/>
    <property type="match status" value="2"/>
</dbReference>
<dbReference type="SUPFAM" id="SSF52540">
    <property type="entry name" value="P-loop containing nucleoside triphosphate hydrolases"/>
    <property type="match status" value="1"/>
</dbReference>
<dbReference type="SUPFAM" id="SSF50447">
    <property type="entry name" value="Translation proteins"/>
    <property type="match status" value="1"/>
</dbReference>
<dbReference type="PROSITE" id="PS00301">
    <property type="entry name" value="G_TR_1"/>
    <property type="match status" value="1"/>
</dbReference>
<dbReference type="PROSITE" id="PS51722">
    <property type="entry name" value="G_TR_2"/>
    <property type="match status" value="1"/>
</dbReference>
<evidence type="ECO:0000255" key="1">
    <source>
        <dbReference type="HAMAP-Rule" id="MF_00071"/>
    </source>
</evidence>
<organism>
    <name type="scientific">Burkholderia pseudomallei (strain 1710b)</name>
    <dbReference type="NCBI Taxonomy" id="320372"/>
    <lineage>
        <taxon>Bacteria</taxon>
        <taxon>Pseudomonadati</taxon>
        <taxon>Pseudomonadota</taxon>
        <taxon>Betaproteobacteria</taxon>
        <taxon>Burkholderiales</taxon>
        <taxon>Burkholderiaceae</taxon>
        <taxon>Burkholderia</taxon>
        <taxon>pseudomallei group</taxon>
    </lineage>
</organism>
<protein>
    <recommendedName>
        <fullName evidence="1">Elongation factor 4</fullName>
        <shortName evidence="1">EF-4</shortName>
        <ecNumber evidence="1">3.6.5.n1</ecNumber>
    </recommendedName>
    <alternativeName>
        <fullName evidence="1">Ribosomal back-translocase LepA</fullName>
    </alternativeName>
</protein>
<comment type="function">
    <text evidence="1">Required for accurate and efficient protein synthesis under certain stress conditions. May act as a fidelity factor of the translation reaction, by catalyzing a one-codon backward translocation of tRNAs on improperly translocated ribosomes. Back-translocation proceeds from a post-translocation (POST) complex to a pre-translocation (PRE) complex, thus giving elongation factor G a second chance to translocate the tRNAs correctly. Binds to ribosomes in a GTP-dependent manner.</text>
</comment>
<comment type="catalytic activity">
    <reaction evidence="1">
        <text>GTP + H2O = GDP + phosphate + H(+)</text>
        <dbReference type="Rhea" id="RHEA:19669"/>
        <dbReference type="ChEBI" id="CHEBI:15377"/>
        <dbReference type="ChEBI" id="CHEBI:15378"/>
        <dbReference type="ChEBI" id="CHEBI:37565"/>
        <dbReference type="ChEBI" id="CHEBI:43474"/>
        <dbReference type="ChEBI" id="CHEBI:58189"/>
        <dbReference type="EC" id="3.6.5.n1"/>
    </reaction>
</comment>
<comment type="subcellular location">
    <subcellularLocation>
        <location evidence="1">Cell inner membrane</location>
        <topology evidence="1">Peripheral membrane protein</topology>
        <orientation evidence="1">Cytoplasmic side</orientation>
    </subcellularLocation>
</comment>
<comment type="similarity">
    <text evidence="1">Belongs to the TRAFAC class translation factor GTPase superfamily. Classic translation factor GTPase family. LepA subfamily.</text>
</comment>